<keyword id="KW-0012">Acyltransferase</keyword>
<keyword id="KW-0028">Amino-acid biosynthesis</keyword>
<keyword id="KW-0198">Cysteine biosynthesis</keyword>
<keyword id="KW-0963">Cytoplasm</keyword>
<keyword id="KW-0677">Repeat</keyword>
<keyword id="KW-0808">Transferase</keyword>
<proteinExistence type="inferred from homology"/>
<accession>Q5HIE6</accession>
<sequence length="213" mass="23528">MLKRMRDDIKMVFEQDPAARSTLEVITTYAGLHAVWSHLIAHKLYNQKKYVAARAISQISRFFTGIEIHPGAKIGKRLFIDHGMGVVIGETCTIGDNVTIYQGVTLGGTGKERGKRHPDIGDNVLIAAGAKVLGNIKINSNVNIGANSVVLQSVPSYSTVVGIPGHIVKQDGVRVGKTFDHRHLPDPIYEQIKHLERQLEKTRNGEIQDDYII</sequence>
<name>CYSE_STAAC</name>
<evidence type="ECO:0000305" key="1"/>
<dbReference type="EC" id="2.3.1.30"/>
<dbReference type="EMBL" id="CP000046">
    <property type="protein sequence ID" value="AAW37685.1"/>
    <property type="molecule type" value="Genomic_DNA"/>
</dbReference>
<dbReference type="SMR" id="Q5HIE6"/>
<dbReference type="KEGG" id="sac:SACOL0575"/>
<dbReference type="HOGENOM" id="CLU_051638_10_0_9"/>
<dbReference type="UniPathway" id="UPA00136">
    <property type="reaction ID" value="UER00199"/>
</dbReference>
<dbReference type="Proteomes" id="UP000000530">
    <property type="component" value="Chromosome"/>
</dbReference>
<dbReference type="GO" id="GO:0005737">
    <property type="term" value="C:cytoplasm"/>
    <property type="evidence" value="ECO:0007669"/>
    <property type="project" value="UniProtKB-SubCell"/>
</dbReference>
<dbReference type="GO" id="GO:0009001">
    <property type="term" value="F:serine O-acetyltransferase activity"/>
    <property type="evidence" value="ECO:0007669"/>
    <property type="project" value="UniProtKB-EC"/>
</dbReference>
<dbReference type="GO" id="GO:0006535">
    <property type="term" value="P:cysteine biosynthetic process from serine"/>
    <property type="evidence" value="ECO:0007669"/>
    <property type="project" value="InterPro"/>
</dbReference>
<dbReference type="CDD" id="cd03354">
    <property type="entry name" value="LbH_SAT"/>
    <property type="match status" value="1"/>
</dbReference>
<dbReference type="FunFam" id="1.10.3130.10:FF:000002">
    <property type="entry name" value="Serine acetyltransferase"/>
    <property type="match status" value="1"/>
</dbReference>
<dbReference type="FunFam" id="2.160.10.10:FF:000007">
    <property type="entry name" value="Serine acetyltransferase"/>
    <property type="match status" value="1"/>
</dbReference>
<dbReference type="Gene3D" id="2.160.10.10">
    <property type="entry name" value="Hexapeptide repeat proteins"/>
    <property type="match status" value="1"/>
</dbReference>
<dbReference type="Gene3D" id="1.10.3130.10">
    <property type="entry name" value="serine acetyltransferase, domain 1"/>
    <property type="match status" value="1"/>
</dbReference>
<dbReference type="InterPro" id="IPR001451">
    <property type="entry name" value="Hexapep"/>
</dbReference>
<dbReference type="InterPro" id="IPR045304">
    <property type="entry name" value="LbH_SAT"/>
</dbReference>
<dbReference type="InterPro" id="IPR042122">
    <property type="entry name" value="Ser_AcTrfase_N_sf"/>
</dbReference>
<dbReference type="InterPro" id="IPR005881">
    <property type="entry name" value="Ser_O-AcTrfase"/>
</dbReference>
<dbReference type="InterPro" id="IPR053376">
    <property type="entry name" value="Serine_acetyltransferase"/>
</dbReference>
<dbReference type="InterPro" id="IPR011004">
    <property type="entry name" value="Trimer_LpxA-like_sf"/>
</dbReference>
<dbReference type="NCBIfam" id="TIGR01172">
    <property type="entry name" value="cysE"/>
    <property type="match status" value="1"/>
</dbReference>
<dbReference type="NCBIfam" id="NF041874">
    <property type="entry name" value="EPS_EpsC"/>
    <property type="match status" value="1"/>
</dbReference>
<dbReference type="PANTHER" id="PTHR42811">
    <property type="entry name" value="SERINE ACETYLTRANSFERASE"/>
    <property type="match status" value="1"/>
</dbReference>
<dbReference type="Pfam" id="PF00132">
    <property type="entry name" value="Hexapep"/>
    <property type="match status" value="1"/>
</dbReference>
<dbReference type="PIRSF" id="PIRSF000441">
    <property type="entry name" value="CysE"/>
    <property type="match status" value="1"/>
</dbReference>
<dbReference type="SUPFAM" id="SSF51161">
    <property type="entry name" value="Trimeric LpxA-like enzymes"/>
    <property type="match status" value="1"/>
</dbReference>
<protein>
    <recommendedName>
        <fullName>Serine acetyltransferase</fullName>
        <shortName>SAT</shortName>
        <ecNumber>2.3.1.30</ecNumber>
    </recommendedName>
</protein>
<comment type="catalytic activity">
    <reaction>
        <text>L-serine + acetyl-CoA = O-acetyl-L-serine + CoA</text>
        <dbReference type="Rhea" id="RHEA:24560"/>
        <dbReference type="ChEBI" id="CHEBI:33384"/>
        <dbReference type="ChEBI" id="CHEBI:57287"/>
        <dbReference type="ChEBI" id="CHEBI:57288"/>
        <dbReference type="ChEBI" id="CHEBI:58340"/>
        <dbReference type="EC" id="2.3.1.30"/>
    </reaction>
</comment>
<comment type="pathway">
    <text>Amino-acid biosynthesis; L-cysteine biosynthesis; L-cysteine from L-serine: step 1/2.</text>
</comment>
<comment type="subcellular location">
    <subcellularLocation>
        <location>Cytoplasm</location>
    </subcellularLocation>
</comment>
<comment type="similarity">
    <text evidence="1">Belongs to the transferase hexapeptide repeat family.</text>
</comment>
<reference key="1">
    <citation type="journal article" date="2005" name="J. Bacteriol.">
        <title>Insights on evolution of virulence and resistance from the complete genome analysis of an early methicillin-resistant Staphylococcus aureus strain and a biofilm-producing methicillin-resistant Staphylococcus epidermidis strain.</title>
        <authorList>
            <person name="Gill S.R."/>
            <person name="Fouts D.E."/>
            <person name="Archer G.L."/>
            <person name="Mongodin E.F."/>
            <person name="DeBoy R.T."/>
            <person name="Ravel J."/>
            <person name="Paulsen I.T."/>
            <person name="Kolonay J.F."/>
            <person name="Brinkac L.M."/>
            <person name="Beanan M.J."/>
            <person name="Dodson R.J."/>
            <person name="Daugherty S.C."/>
            <person name="Madupu R."/>
            <person name="Angiuoli S.V."/>
            <person name="Durkin A.S."/>
            <person name="Haft D.H."/>
            <person name="Vamathevan J.J."/>
            <person name="Khouri H."/>
            <person name="Utterback T.R."/>
            <person name="Lee C."/>
            <person name="Dimitrov G."/>
            <person name="Jiang L."/>
            <person name="Qin H."/>
            <person name="Weidman J."/>
            <person name="Tran K."/>
            <person name="Kang K.H."/>
            <person name="Hance I.R."/>
            <person name="Nelson K.E."/>
            <person name="Fraser C.M."/>
        </authorList>
    </citation>
    <scope>NUCLEOTIDE SEQUENCE [LARGE SCALE GENOMIC DNA]</scope>
    <source>
        <strain>COL</strain>
    </source>
</reference>
<gene>
    <name type="primary">cysE</name>
    <name type="ordered locus">SACOL0575</name>
</gene>
<organism>
    <name type="scientific">Staphylococcus aureus (strain COL)</name>
    <dbReference type="NCBI Taxonomy" id="93062"/>
    <lineage>
        <taxon>Bacteria</taxon>
        <taxon>Bacillati</taxon>
        <taxon>Bacillota</taxon>
        <taxon>Bacilli</taxon>
        <taxon>Bacillales</taxon>
        <taxon>Staphylococcaceae</taxon>
        <taxon>Staphylococcus</taxon>
    </lineage>
</organism>
<feature type="chain" id="PRO_0000068677" description="Serine acetyltransferase">
    <location>
        <begin position="1"/>
        <end position="213"/>
    </location>
</feature>